<feature type="chain" id="PRO_0000076871" description="3-isopropylmalate dehydratase large subunit 2">
    <location>
        <begin position="1"/>
        <end position="402"/>
    </location>
</feature>
<feature type="binding site" evidence="1">
    <location>
        <position position="280"/>
    </location>
    <ligand>
        <name>[4Fe-4S] cluster</name>
        <dbReference type="ChEBI" id="CHEBI:49883"/>
    </ligand>
</feature>
<feature type="binding site" evidence="1">
    <location>
        <position position="341"/>
    </location>
    <ligand>
        <name>[4Fe-4S] cluster</name>
        <dbReference type="ChEBI" id="CHEBI:49883"/>
    </ligand>
</feature>
<feature type="binding site" evidence="1">
    <location>
        <position position="344"/>
    </location>
    <ligand>
        <name>[4Fe-4S] cluster</name>
        <dbReference type="ChEBI" id="CHEBI:49883"/>
    </ligand>
</feature>
<name>LEUC2_METKA</name>
<gene>
    <name evidence="1" type="primary">leuC2</name>
    <name type="ordered locus">MK1208</name>
</gene>
<reference key="1">
    <citation type="journal article" date="2002" name="Proc. Natl. Acad. Sci. U.S.A.">
        <title>The complete genome of hyperthermophile Methanopyrus kandleri AV19 and monophyly of archaeal methanogens.</title>
        <authorList>
            <person name="Slesarev A.I."/>
            <person name="Mezhevaya K.V."/>
            <person name="Makarova K.S."/>
            <person name="Polushin N.N."/>
            <person name="Shcherbinina O.V."/>
            <person name="Shakhova V.V."/>
            <person name="Belova G.I."/>
            <person name="Aravind L."/>
            <person name="Natale D.A."/>
            <person name="Rogozin I.B."/>
            <person name="Tatusov R.L."/>
            <person name="Wolf Y.I."/>
            <person name="Stetter K.O."/>
            <person name="Malykh A.G."/>
            <person name="Koonin E.V."/>
            <person name="Kozyavkin S.A."/>
        </authorList>
    </citation>
    <scope>NUCLEOTIDE SEQUENCE [LARGE SCALE GENOMIC DNA]</scope>
    <source>
        <strain>AV19 / DSM 6324 / JCM 9639 / NBRC 100938</strain>
    </source>
</reference>
<dbReference type="EC" id="4.2.1.33" evidence="1"/>
<dbReference type="EMBL" id="AE009439">
    <property type="protein sequence ID" value="AAM02421.1"/>
    <property type="molecule type" value="Genomic_DNA"/>
</dbReference>
<dbReference type="RefSeq" id="WP_011019576.1">
    <property type="nucleotide sequence ID" value="NC_003551.1"/>
</dbReference>
<dbReference type="SMR" id="Q8TW29"/>
<dbReference type="STRING" id="190192.MK1208"/>
<dbReference type="PaxDb" id="190192-MK1208"/>
<dbReference type="EnsemblBacteria" id="AAM02421">
    <property type="protein sequence ID" value="AAM02421"/>
    <property type="gene ID" value="MK1208"/>
</dbReference>
<dbReference type="GeneID" id="1477803"/>
<dbReference type="KEGG" id="mka:MK1208"/>
<dbReference type="HOGENOM" id="CLU_006714_3_4_2"/>
<dbReference type="InParanoid" id="Q8TW29"/>
<dbReference type="OrthoDB" id="255at2157"/>
<dbReference type="UniPathway" id="UPA00048">
    <property type="reaction ID" value="UER00071"/>
</dbReference>
<dbReference type="Proteomes" id="UP000001826">
    <property type="component" value="Chromosome"/>
</dbReference>
<dbReference type="GO" id="GO:0003861">
    <property type="term" value="F:3-isopropylmalate dehydratase activity"/>
    <property type="evidence" value="ECO:0007669"/>
    <property type="project" value="UniProtKB-UniRule"/>
</dbReference>
<dbReference type="GO" id="GO:0051539">
    <property type="term" value="F:4 iron, 4 sulfur cluster binding"/>
    <property type="evidence" value="ECO:0007669"/>
    <property type="project" value="UniProtKB-KW"/>
</dbReference>
<dbReference type="GO" id="GO:0046872">
    <property type="term" value="F:metal ion binding"/>
    <property type="evidence" value="ECO:0007669"/>
    <property type="project" value="UniProtKB-KW"/>
</dbReference>
<dbReference type="GO" id="GO:0009098">
    <property type="term" value="P:L-leucine biosynthetic process"/>
    <property type="evidence" value="ECO:0007669"/>
    <property type="project" value="UniProtKB-UniRule"/>
</dbReference>
<dbReference type="CDD" id="cd01583">
    <property type="entry name" value="IPMI"/>
    <property type="match status" value="1"/>
</dbReference>
<dbReference type="Gene3D" id="3.30.499.10">
    <property type="entry name" value="Aconitase, domain 3"/>
    <property type="match status" value="2"/>
</dbReference>
<dbReference type="HAMAP" id="MF_01027">
    <property type="entry name" value="LeuC_type2"/>
    <property type="match status" value="1"/>
</dbReference>
<dbReference type="InterPro" id="IPR015931">
    <property type="entry name" value="Acnase/IPM_dHydase_lsu_aba_1/3"/>
</dbReference>
<dbReference type="InterPro" id="IPR001030">
    <property type="entry name" value="Acoase/IPM_deHydtase_lsu_aba"/>
</dbReference>
<dbReference type="InterPro" id="IPR018136">
    <property type="entry name" value="Aconitase_4Fe-4S_BS"/>
</dbReference>
<dbReference type="InterPro" id="IPR036008">
    <property type="entry name" value="Aconitase_4Fe-4S_dom"/>
</dbReference>
<dbReference type="InterPro" id="IPR011826">
    <property type="entry name" value="HAcnase/IPMdehydase_lsu_prok"/>
</dbReference>
<dbReference type="InterPro" id="IPR006251">
    <property type="entry name" value="Homoacnase/IPMdehydase_lsu"/>
</dbReference>
<dbReference type="InterPro" id="IPR050067">
    <property type="entry name" value="IPM_dehydratase_rel_enz"/>
</dbReference>
<dbReference type="InterPro" id="IPR033941">
    <property type="entry name" value="IPMI_cat"/>
</dbReference>
<dbReference type="NCBIfam" id="TIGR01343">
    <property type="entry name" value="hacA_fam"/>
    <property type="match status" value="1"/>
</dbReference>
<dbReference type="NCBIfam" id="TIGR02086">
    <property type="entry name" value="IPMI_arch"/>
    <property type="match status" value="1"/>
</dbReference>
<dbReference type="NCBIfam" id="NF001614">
    <property type="entry name" value="PRK00402.1"/>
    <property type="match status" value="1"/>
</dbReference>
<dbReference type="PANTHER" id="PTHR43822:SF21">
    <property type="entry name" value="3-ISOPROPYLMALATE DEHYDRATASE LARGE SUBUNIT 1"/>
    <property type="match status" value="1"/>
</dbReference>
<dbReference type="PANTHER" id="PTHR43822">
    <property type="entry name" value="HOMOACONITASE, MITOCHONDRIAL-RELATED"/>
    <property type="match status" value="1"/>
</dbReference>
<dbReference type="Pfam" id="PF00330">
    <property type="entry name" value="Aconitase"/>
    <property type="match status" value="2"/>
</dbReference>
<dbReference type="PRINTS" id="PR00415">
    <property type="entry name" value="ACONITASE"/>
</dbReference>
<dbReference type="SUPFAM" id="SSF53732">
    <property type="entry name" value="Aconitase iron-sulfur domain"/>
    <property type="match status" value="1"/>
</dbReference>
<dbReference type="PROSITE" id="PS00450">
    <property type="entry name" value="ACONITASE_1"/>
    <property type="match status" value="1"/>
</dbReference>
<dbReference type="PROSITE" id="PS01244">
    <property type="entry name" value="ACONITASE_2"/>
    <property type="match status" value="1"/>
</dbReference>
<keyword id="KW-0004">4Fe-4S</keyword>
<keyword id="KW-0028">Amino-acid biosynthesis</keyword>
<keyword id="KW-0100">Branched-chain amino acid biosynthesis</keyword>
<keyword id="KW-0408">Iron</keyword>
<keyword id="KW-0411">Iron-sulfur</keyword>
<keyword id="KW-0432">Leucine biosynthesis</keyword>
<keyword id="KW-0456">Lyase</keyword>
<keyword id="KW-0479">Metal-binding</keyword>
<keyword id="KW-1185">Reference proteome</keyword>
<protein>
    <recommendedName>
        <fullName evidence="1">3-isopropylmalate dehydratase large subunit 2</fullName>
        <ecNumber evidence="1">4.2.1.33</ecNumber>
    </recommendedName>
    <alternativeName>
        <fullName evidence="1">Alpha-IPM isomerase 2</fullName>
        <shortName evidence="1">IPMI 2</shortName>
    </alternativeName>
    <alternativeName>
        <fullName evidence="1">Isopropylmalate isomerase 2</fullName>
    </alternativeName>
</protein>
<accession>Q8TW29</accession>
<evidence type="ECO:0000255" key="1">
    <source>
        <dbReference type="HAMAP-Rule" id="MF_01027"/>
    </source>
</evidence>
<proteinExistence type="inferred from homology"/>
<organism>
    <name type="scientific">Methanopyrus kandleri (strain AV19 / DSM 6324 / JCM 9639 / NBRC 100938)</name>
    <dbReference type="NCBI Taxonomy" id="190192"/>
    <lineage>
        <taxon>Archaea</taxon>
        <taxon>Methanobacteriati</taxon>
        <taxon>Methanobacteriota</taxon>
        <taxon>Methanomada group</taxon>
        <taxon>Methanopyri</taxon>
        <taxon>Methanopyrales</taxon>
        <taxon>Methanopyraceae</taxon>
        <taxon>Methanopyrus</taxon>
    </lineage>
</organism>
<comment type="function">
    <text evidence="1">Catalyzes the isomerization between 2-isopropylmalate and 3-isopropylmalate, via the formation of 2-isopropylmaleate.</text>
</comment>
<comment type="catalytic activity">
    <reaction evidence="1">
        <text>(2R,3S)-3-isopropylmalate = (2S)-2-isopropylmalate</text>
        <dbReference type="Rhea" id="RHEA:32287"/>
        <dbReference type="ChEBI" id="CHEBI:1178"/>
        <dbReference type="ChEBI" id="CHEBI:35121"/>
        <dbReference type="EC" id="4.2.1.33"/>
    </reaction>
</comment>
<comment type="cofactor">
    <cofactor evidence="1">
        <name>[4Fe-4S] cluster</name>
        <dbReference type="ChEBI" id="CHEBI:49883"/>
    </cofactor>
    <text evidence="1">Binds 1 [4Fe-4S] cluster per subunit.</text>
</comment>
<comment type="pathway">
    <text evidence="1">Amino-acid biosynthesis; L-leucine biosynthesis; L-leucine from 3-methyl-2-oxobutanoate: step 2/4.</text>
</comment>
<comment type="subunit">
    <text evidence="1">Heterodimer of LeuC and LeuD.</text>
</comment>
<comment type="similarity">
    <text evidence="1">Belongs to the aconitase/IPM isomerase family. LeuC type 2 subfamily.</text>
</comment>
<sequence length="402" mass="43096">MPSVAERILSEKVGEPVEAGETVYVEPDVIMLHDGSGATALRTLRELGVERVESPEKVVLIFDHSVPPSSVEAANRQNELLEFARRHRIEHVHVDEGVCHQVLVEEGYAGPGRVVFGGDSHTPTSGAASALAFGFGGTDMAFALLYGELWIRVPRTVRVHVEGELEEPATAKDLALTVVGELGAGYADYAVLEYTGLPERMSLGDRMCLCNLATEAGAKSAYVPPKEGPEELRPGDADEVIELDASEVEPVVSVPHRVDDVRPVGDVQGVEVTRVFVGSCTNGRYRDVRVFTEILEELDGPHPDVRIVVVPASRRVLERMTEAGLTLKLIRMGVMIAPPGCGPCLGEHLGVLGDDDVCVSTANRNFPGRMGSRRAEIYLASPVTAAVAAAEGELVDPQDVLG</sequence>